<proteinExistence type="evidence at protein level"/>
<gene>
    <name type="primary">LOG1</name>
    <name type="ordered locus">At2g28305</name>
    <name type="ORF">T1B3.18</name>
    <name type="ORF">T3B23.2</name>
</gene>
<accession>Q8RUN2</accession>
<accession>Q9ASW6</accession>
<feature type="chain" id="PRO_0000395044" description="Cytokinin riboside 5'-monophosphate phosphoribohydrolase LOG1">
    <location>
        <begin position="1"/>
        <end position="213"/>
    </location>
</feature>
<feature type="binding site" evidence="1">
    <location>
        <position position="78"/>
    </location>
    <ligand>
        <name>substrate</name>
    </ligand>
</feature>
<feature type="binding site" evidence="1">
    <location>
        <begin position="96"/>
        <end position="97"/>
    </location>
    <ligand>
        <name>substrate</name>
    </ligand>
</feature>
<feature type="binding site" evidence="1">
    <location>
        <begin position="113"/>
        <end position="119"/>
    </location>
    <ligand>
        <name>substrate</name>
    </ligand>
</feature>
<feature type="binding site" evidence="1">
    <location>
        <position position="125"/>
    </location>
    <ligand>
        <name>substrate</name>
    </ligand>
</feature>
<feature type="sequence conflict" description="In Ref. 3; AAL87406/AAK32797." evidence="3" ref="3">
    <original>D</original>
    <variation>N</variation>
    <location>
        <position position="133"/>
    </location>
</feature>
<dbReference type="EC" id="3.2.2.n1"/>
<dbReference type="EMBL" id="AC006202">
    <property type="protein sequence ID" value="AAM15149.1"/>
    <property type="molecule type" value="Genomic_DNA"/>
</dbReference>
<dbReference type="EMBL" id="AC006283">
    <property type="protein sequence ID" value="AAM15229.1"/>
    <property type="molecule type" value="Genomic_DNA"/>
</dbReference>
<dbReference type="EMBL" id="CP002685">
    <property type="protein sequence ID" value="AEC08102.1"/>
    <property type="molecule type" value="Genomic_DNA"/>
</dbReference>
<dbReference type="EMBL" id="AF361629">
    <property type="protein sequence ID" value="AAK32797.1"/>
    <property type="molecule type" value="mRNA"/>
</dbReference>
<dbReference type="EMBL" id="AY081836">
    <property type="protein sequence ID" value="AAL87406.1"/>
    <property type="molecule type" value="mRNA"/>
</dbReference>
<dbReference type="EMBL" id="AY086265">
    <property type="protein sequence ID" value="AAM64338.1"/>
    <property type="molecule type" value="mRNA"/>
</dbReference>
<dbReference type="RefSeq" id="NP_565668.1">
    <property type="nucleotide sequence ID" value="NM_128389.3"/>
</dbReference>
<dbReference type="SMR" id="Q8RUN2"/>
<dbReference type="BioGRID" id="2726">
    <property type="interactions" value="1"/>
</dbReference>
<dbReference type="FunCoup" id="Q8RUN2">
    <property type="interactions" value="9"/>
</dbReference>
<dbReference type="STRING" id="3702.Q8RUN2"/>
<dbReference type="PaxDb" id="3702-AT2G28305.1"/>
<dbReference type="ProteomicsDB" id="238415"/>
<dbReference type="EnsemblPlants" id="AT2G28305.1">
    <property type="protein sequence ID" value="AT2G28305.1"/>
    <property type="gene ID" value="AT2G28305"/>
</dbReference>
<dbReference type="GeneID" id="817376"/>
<dbReference type="Gramene" id="AT2G28305.1">
    <property type="protein sequence ID" value="AT2G28305.1"/>
    <property type="gene ID" value="AT2G28305"/>
</dbReference>
<dbReference type="KEGG" id="ath:AT2G28305"/>
<dbReference type="Araport" id="AT2G28305"/>
<dbReference type="TAIR" id="AT2G28305">
    <property type="gene designation" value="LOG1"/>
</dbReference>
<dbReference type="eggNOG" id="ENOG502QSR9">
    <property type="taxonomic scope" value="Eukaryota"/>
</dbReference>
<dbReference type="HOGENOM" id="CLU_058336_2_0_1"/>
<dbReference type="InParanoid" id="Q8RUN2"/>
<dbReference type="OMA" id="CERKEMK"/>
<dbReference type="OrthoDB" id="414463at2759"/>
<dbReference type="PhylomeDB" id="Q8RUN2"/>
<dbReference type="PRO" id="PR:Q8RUN2"/>
<dbReference type="Proteomes" id="UP000006548">
    <property type="component" value="Chromosome 2"/>
</dbReference>
<dbReference type="ExpressionAtlas" id="Q8RUN2">
    <property type="expression patterns" value="baseline and differential"/>
</dbReference>
<dbReference type="GO" id="GO:0005829">
    <property type="term" value="C:cytosol"/>
    <property type="evidence" value="ECO:0000314"/>
    <property type="project" value="TAIR"/>
</dbReference>
<dbReference type="GO" id="GO:0005634">
    <property type="term" value="C:nucleus"/>
    <property type="evidence" value="ECO:0000314"/>
    <property type="project" value="TAIR"/>
</dbReference>
<dbReference type="GO" id="GO:0102682">
    <property type="term" value="F:cytokinin riboside 5'-monophosphate phosphoribohydrolase activity"/>
    <property type="evidence" value="ECO:0007669"/>
    <property type="project" value="RHEA"/>
</dbReference>
<dbReference type="GO" id="GO:0009691">
    <property type="term" value="P:cytokinin biosynthetic process"/>
    <property type="evidence" value="ECO:0007669"/>
    <property type="project" value="UniProtKB-KW"/>
</dbReference>
<dbReference type="FunFam" id="3.40.50.450:FF:000005">
    <property type="entry name" value="CASP-like protein"/>
    <property type="match status" value="1"/>
</dbReference>
<dbReference type="Gene3D" id="3.40.50.450">
    <property type="match status" value="1"/>
</dbReference>
<dbReference type="InterPro" id="IPR005269">
    <property type="entry name" value="LOG"/>
</dbReference>
<dbReference type="InterPro" id="IPR031100">
    <property type="entry name" value="LOG_fam"/>
</dbReference>
<dbReference type="NCBIfam" id="TIGR00730">
    <property type="entry name" value="Rossman fold protein, TIGR00730 family"/>
    <property type="match status" value="1"/>
</dbReference>
<dbReference type="PANTHER" id="PTHR31223:SF65">
    <property type="entry name" value="CYTOKININ RIBOSIDE 5'-MONOPHOSPHATE PHOSPHORIBOHYDROLASE LOG1"/>
    <property type="match status" value="1"/>
</dbReference>
<dbReference type="PANTHER" id="PTHR31223">
    <property type="entry name" value="LOG FAMILY PROTEIN YJL055W"/>
    <property type="match status" value="1"/>
</dbReference>
<dbReference type="Pfam" id="PF03641">
    <property type="entry name" value="Lysine_decarbox"/>
    <property type="match status" value="1"/>
</dbReference>
<dbReference type="SUPFAM" id="SSF102405">
    <property type="entry name" value="MCP/YpsA-like"/>
    <property type="match status" value="1"/>
</dbReference>
<keyword id="KW-0203">Cytokinin biosynthesis</keyword>
<keyword id="KW-0963">Cytoplasm</keyword>
<keyword id="KW-0378">Hydrolase</keyword>
<keyword id="KW-0539">Nucleus</keyword>
<keyword id="KW-1185">Reference proteome</keyword>
<evidence type="ECO:0000250" key="1">
    <source>
        <dbReference type="UniProtKB" id="B2HS63"/>
    </source>
</evidence>
<evidence type="ECO:0000269" key="2">
    <source>
    </source>
</evidence>
<evidence type="ECO:0000305" key="3"/>
<comment type="function">
    <text evidence="2">Cytokinin-activating enzyme working in the direct activation pathway. Phosphoribohydrolase that converts inactive cytokinin nucleotides to the biologically active free-base forms.</text>
</comment>
<comment type="catalytic activity">
    <reaction evidence="2">
        <text>N(6)-(dimethylallyl)adenosine 5'-phosphate + H2O = N(6)-dimethylallyladenine + D-ribose 5-phosphate</text>
        <dbReference type="Rhea" id="RHEA:48560"/>
        <dbReference type="ChEBI" id="CHEBI:15377"/>
        <dbReference type="ChEBI" id="CHEBI:17660"/>
        <dbReference type="ChEBI" id="CHEBI:57526"/>
        <dbReference type="ChEBI" id="CHEBI:78346"/>
        <dbReference type="EC" id="3.2.2.n1"/>
    </reaction>
</comment>
<comment type="catalytic activity">
    <reaction evidence="2">
        <text>9-ribosyl-trans-zeatin 5'-phosphate + H2O = trans-zeatin + D-ribose 5-phosphate</text>
        <dbReference type="Rhea" id="RHEA:48564"/>
        <dbReference type="ChEBI" id="CHEBI:15377"/>
        <dbReference type="ChEBI" id="CHEBI:16522"/>
        <dbReference type="ChEBI" id="CHEBI:78346"/>
        <dbReference type="ChEBI" id="CHEBI:87947"/>
        <dbReference type="EC" id="3.2.2.n1"/>
    </reaction>
</comment>
<comment type="biophysicochemical properties">
    <kinetics>
        <KM evidence="2">16 uM for N(6)-(Delta(2)-isopentenyl)-adenosine 5'-phosphate</KM>
        <Vmax evidence="2">2.1 umol/min/mg enzyme with N(6)-(Delta(2)-isopentenyl)-adenosine 5'-phosphate as substrate</Vmax>
    </kinetics>
    <phDependence>
        <text evidence="2">Optimum pH is 6.5.</text>
    </phDependence>
</comment>
<comment type="subcellular location">
    <subcellularLocation>
        <location evidence="2">Cytoplasm</location>
    </subcellularLocation>
    <subcellularLocation>
        <location evidence="2">Nucleus</location>
    </subcellularLocation>
</comment>
<comment type="tissue specificity">
    <text evidence="2">Expressed in roots and shoots. Detected in the vascular tissues of roots, cotyledons, leaves and pistils, in the shoot apical meristem and in immature flowers.</text>
</comment>
<comment type="similarity">
    <text evidence="3">Belongs to the LOG family.</text>
</comment>
<sequence>MEIESKFKRICVFCGSSAGNKVSYKDAAIELGTELVSRNIDLVYGGGSIGLMGLISQAVFNGGRHVIGVIPKTLMPREITGETVGEVKAVADMHQRKAEMAKHSDAFIALPGGYGTLEELLEVITWAQLGIHDKPVGLLNVEGYYNSLLSFIDKAVEEGFISPTARHIIVSAPSAKELVKKLEDYVPRHEKVASKKSWEMEQIGLSPTCEISR</sequence>
<organism>
    <name type="scientific">Arabidopsis thaliana</name>
    <name type="common">Mouse-ear cress</name>
    <dbReference type="NCBI Taxonomy" id="3702"/>
    <lineage>
        <taxon>Eukaryota</taxon>
        <taxon>Viridiplantae</taxon>
        <taxon>Streptophyta</taxon>
        <taxon>Embryophyta</taxon>
        <taxon>Tracheophyta</taxon>
        <taxon>Spermatophyta</taxon>
        <taxon>Magnoliopsida</taxon>
        <taxon>eudicotyledons</taxon>
        <taxon>Gunneridae</taxon>
        <taxon>Pentapetalae</taxon>
        <taxon>rosids</taxon>
        <taxon>malvids</taxon>
        <taxon>Brassicales</taxon>
        <taxon>Brassicaceae</taxon>
        <taxon>Camelineae</taxon>
        <taxon>Arabidopsis</taxon>
    </lineage>
</organism>
<protein>
    <recommendedName>
        <fullName>Cytokinin riboside 5'-monophosphate phosphoribohydrolase LOG1</fullName>
        <ecNumber>3.2.2.n1</ecNumber>
    </recommendedName>
    <alternativeName>
        <fullName>Protein LONELY GUY 1</fullName>
    </alternativeName>
</protein>
<name>LOG1_ARATH</name>
<reference key="1">
    <citation type="journal article" date="1999" name="Nature">
        <title>Sequence and analysis of chromosome 2 of the plant Arabidopsis thaliana.</title>
        <authorList>
            <person name="Lin X."/>
            <person name="Kaul S."/>
            <person name="Rounsley S.D."/>
            <person name="Shea T.P."/>
            <person name="Benito M.-I."/>
            <person name="Town C.D."/>
            <person name="Fujii C.Y."/>
            <person name="Mason T.M."/>
            <person name="Bowman C.L."/>
            <person name="Barnstead M.E."/>
            <person name="Feldblyum T.V."/>
            <person name="Buell C.R."/>
            <person name="Ketchum K.A."/>
            <person name="Lee J.J."/>
            <person name="Ronning C.M."/>
            <person name="Koo H.L."/>
            <person name="Moffat K.S."/>
            <person name="Cronin L.A."/>
            <person name="Shen M."/>
            <person name="Pai G."/>
            <person name="Van Aken S."/>
            <person name="Umayam L."/>
            <person name="Tallon L.J."/>
            <person name="Gill J.E."/>
            <person name="Adams M.D."/>
            <person name="Carrera A.J."/>
            <person name="Creasy T.H."/>
            <person name="Goodman H.M."/>
            <person name="Somerville C.R."/>
            <person name="Copenhaver G.P."/>
            <person name="Preuss D."/>
            <person name="Nierman W.C."/>
            <person name="White O."/>
            <person name="Eisen J.A."/>
            <person name="Salzberg S.L."/>
            <person name="Fraser C.M."/>
            <person name="Venter J.C."/>
        </authorList>
    </citation>
    <scope>NUCLEOTIDE SEQUENCE [LARGE SCALE GENOMIC DNA]</scope>
    <source>
        <strain>cv. Columbia</strain>
    </source>
</reference>
<reference key="2">
    <citation type="journal article" date="2017" name="Plant J.">
        <title>Araport11: a complete reannotation of the Arabidopsis thaliana reference genome.</title>
        <authorList>
            <person name="Cheng C.Y."/>
            <person name="Krishnakumar V."/>
            <person name="Chan A.P."/>
            <person name="Thibaud-Nissen F."/>
            <person name="Schobel S."/>
            <person name="Town C.D."/>
        </authorList>
    </citation>
    <scope>GENOME REANNOTATION</scope>
    <source>
        <strain>cv. Columbia</strain>
    </source>
</reference>
<reference key="3">
    <citation type="journal article" date="2003" name="Science">
        <title>Empirical analysis of transcriptional activity in the Arabidopsis genome.</title>
        <authorList>
            <person name="Yamada K."/>
            <person name="Lim J."/>
            <person name="Dale J.M."/>
            <person name="Chen H."/>
            <person name="Shinn P."/>
            <person name="Palm C.J."/>
            <person name="Southwick A.M."/>
            <person name="Wu H.C."/>
            <person name="Kim C.J."/>
            <person name="Nguyen M."/>
            <person name="Pham P.K."/>
            <person name="Cheuk R.F."/>
            <person name="Karlin-Newmann G."/>
            <person name="Liu S.X."/>
            <person name="Lam B."/>
            <person name="Sakano H."/>
            <person name="Wu T."/>
            <person name="Yu G."/>
            <person name="Miranda M."/>
            <person name="Quach H.L."/>
            <person name="Tripp M."/>
            <person name="Chang C.H."/>
            <person name="Lee J.M."/>
            <person name="Toriumi M.J."/>
            <person name="Chan M.M."/>
            <person name="Tang C.C."/>
            <person name="Onodera C.S."/>
            <person name="Deng J.M."/>
            <person name="Akiyama K."/>
            <person name="Ansari Y."/>
            <person name="Arakawa T."/>
            <person name="Banh J."/>
            <person name="Banno F."/>
            <person name="Bowser L."/>
            <person name="Brooks S.Y."/>
            <person name="Carninci P."/>
            <person name="Chao Q."/>
            <person name="Choy N."/>
            <person name="Enju A."/>
            <person name="Goldsmith A.D."/>
            <person name="Gurjal M."/>
            <person name="Hansen N.F."/>
            <person name="Hayashizaki Y."/>
            <person name="Johnson-Hopson C."/>
            <person name="Hsuan V.W."/>
            <person name="Iida K."/>
            <person name="Karnes M."/>
            <person name="Khan S."/>
            <person name="Koesema E."/>
            <person name="Ishida J."/>
            <person name="Jiang P.X."/>
            <person name="Jones T."/>
            <person name="Kawai J."/>
            <person name="Kamiya A."/>
            <person name="Meyers C."/>
            <person name="Nakajima M."/>
            <person name="Narusaka M."/>
            <person name="Seki M."/>
            <person name="Sakurai T."/>
            <person name="Satou M."/>
            <person name="Tamse R."/>
            <person name="Vaysberg M."/>
            <person name="Wallender E.K."/>
            <person name="Wong C."/>
            <person name="Yamamura Y."/>
            <person name="Yuan S."/>
            <person name="Shinozaki K."/>
            <person name="Davis R.W."/>
            <person name="Theologis A."/>
            <person name="Ecker J.R."/>
        </authorList>
    </citation>
    <scope>NUCLEOTIDE SEQUENCE [LARGE SCALE MRNA]</scope>
    <source>
        <strain>cv. Columbia</strain>
    </source>
</reference>
<reference key="4">
    <citation type="submission" date="2002-03" db="EMBL/GenBank/DDBJ databases">
        <title>Full-length cDNA from Arabidopsis thaliana.</title>
        <authorList>
            <person name="Brover V.V."/>
            <person name="Troukhan M.E."/>
            <person name="Alexandrov N.A."/>
            <person name="Lu Y.-P."/>
            <person name="Flavell R.B."/>
            <person name="Feldmann K.A."/>
        </authorList>
    </citation>
    <scope>NUCLEOTIDE SEQUENCE [LARGE SCALE MRNA]</scope>
</reference>
<reference key="5">
    <citation type="journal article" date="2007" name="Nature">
        <title>Direct control of shoot meristem activity by a cytokinin-activating enzyme.</title>
        <authorList>
            <person name="Kurakawa T."/>
            <person name="Ueda N."/>
            <person name="Maekawa M."/>
            <person name="Kobayashi K."/>
            <person name="Kojima M."/>
            <person name="Nagato Y."/>
            <person name="Sakakibara H."/>
            <person name="Kyozuka J."/>
        </authorList>
    </citation>
    <scope>IDENTIFICATION</scope>
</reference>
<reference key="6">
    <citation type="journal article" date="2009" name="Plant Cell">
        <title>Functional analyses of LONELY GUY cytokinin-activating enzymes reveal the importance of the direct activation pathway in Arabidopsis.</title>
        <authorList>
            <person name="Kuroha T."/>
            <person name="Tokunaga H."/>
            <person name="Kojima M."/>
            <person name="Ueda N."/>
            <person name="Ishida T."/>
            <person name="Nagawa S."/>
            <person name="Fukuda H."/>
            <person name="Sugimoto K."/>
            <person name="Sakakibara H."/>
        </authorList>
    </citation>
    <scope>FUNCTION</scope>
    <scope>CATALYTIC ACTIVITY</scope>
    <scope>BIOPHYSICOCHEMICAL PROPERTIES</scope>
    <scope>TISSUE SPECIFICITY</scope>
    <scope>SUBCELLULAR LOCATION</scope>
    <scope>GENE FAMILY</scope>
    <scope>NOMENCLATURE</scope>
</reference>